<sequence>MQLYPGIIGIKVNKIGEDEIEINSEDEIENLSLKDGIAYVHNSAPLYLKGVNTKYVLPKPLKLLRLGIPTSLENAEQVQVNYLTFFDKDYVLVGFNLTDDFKEPFAILEFDEGYTKVVLKDEFSEVKPKKEKIKKAKRKKKGAKRASKKQKAKSKSARKSRRV</sequence>
<organism>
    <name type="scientific">Sulfurisphaera tokodaii (strain DSM 16993 / JCM 10545 / NBRC 100140 / 7)</name>
    <name type="common">Sulfolobus tokodaii</name>
    <dbReference type="NCBI Taxonomy" id="273063"/>
    <lineage>
        <taxon>Archaea</taxon>
        <taxon>Thermoproteota</taxon>
        <taxon>Thermoprotei</taxon>
        <taxon>Sulfolobales</taxon>
        <taxon>Sulfolobaceae</taxon>
        <taxon>Sulfurisphaera</taxon>
    </lineage>
</organism>
<feature type="chain" id="PRO_0000206883" description="Uncharacterized protein STK_12200">
    <location>
        <begin position="1"/>
        <end position="163"/>
    </location>
</feature>
<feature type="region of interest" description="Disordered" evidence="1">
    <location>
        <begin position="128"/>
        <end position="163"/>
    </location>
</feature>
<feature type="compositionally biased region" description="Basic residues" evidence="1">
    <location>
        <begin position="129"/>
        <end position="163"/>
    </location>
</feature>
<reference key="1">
    <citation type="journal article" date="2001" name="DNA Res.">
        <title>Complete genome sequence of an aerobic thermoacidophilic Crenarchaeon, Sulfolobus tokodaii strain7.</title>
        <authorList>
            <person name="Kawarabayasi Y."/>
            <person name="Hino Y."/>
            <person name="Horikawa H."/>
            <person name="Jin-no K."/>
            <person name="Takahashi M."/>
            <person name="Sekine M."/>
            <person name="Baba S."/>
            <person name="Ankai A."/>
            <person name="Kosugi H."/>
            <person name="Hosoyama A."/>
            <person name="Fukui S."/>
            <person name="Nagai Y."/>
            <person name="Nishijima K."/>
            <person name="Otsuka R."/>
            <person name="Nakazawa H."/>
            <person name="Takamiya M."/>
            <person name="Kato Y."/>
            <person name="Yoshizawa T."/>
            <person name="Tanaka T."/>
            <person name="Kudoh Y."/>
            <person name="Yamazaki J."/>
            <person name="Kushida N."/>
            <person name="Oguchi A."/>
            <person name="Aoki K."/>
            <person name="Masuda S."/>
            <person name="Yanagii M."/>
            <person name="Nishimura M."/>
            <person name="Yamagishi A."/>
            <person name="Oshima T."/>
            <person name="Kikuchi H."/>
        </authorList>
    </citation>
    <scope>NUCLEOTIDE SEQUENCE [LARGE SCALE GENOMIC DNA]</scope>
    <source>
        <strain>DSM 16993 / JCM 10545 / NBRC 100140 / 7</strain>
    </source>
</reference>
<keyword id="KW-1185">Reference proteome</keyword>
<protein>
    <recommendedName>
        <fullName>Uncharacterized protein STK_12200</fullName>
    </recommendedName>
</protein>
<gene>
    <name type="ordered locus">STK_12200</name>
</gene>
<accession>Q972A7</accession>
<dbReference type="EMBL" id="BA000023">
    <property type="protein sequence ID" value="BAB66262.1"/>
    <property type="molecule type" value="Genomic_DNA"/>
</dbReference>
<dbReference type="STRING" id="273063.STK_12200"/>
<dbReference type="KEGG" id="sto:STK_12200"/>
<dbReference type="PATRIC" id="fig|273063.9.peg.1378"/>
<dbReference type="eggNOG" id="arCOG07219">
    <property type="taxonomic scope" value="Archaea"/>
</dbReference>
<dbReference type="Proteomes" id="UP000001015">
    <property type="component" value="Chromosome"/>
</dbReference>
<name>Y1220_SULTO</name>
<proteinExistence type="predicted"/>
<evidence type="ECO:0000256" key="1">
    <source>
        <dbReference type="SAM" id="MobiDB-lite"/>
    </source>
</evidence>